<accession>A8L7B7</accession>
<sequence>MNSSAASPPAVSPHAAPSRTTVRARAALQVELDGGGTARITELRAAVPVLPRRTGGSGRVVVVHLVGGAGGPLAGDDLGLDIIVGAGAHLVVRSVAATVALPGHGAGPSTFALRAQVGPAAMLSFLPEPTVVARGARHRMTTEIILAADARLRYREEIILGRFGEPGGDLETSLRVDVDQAPGPAPTTDAGTAPAPGPRRRPLLHQELRLGPRVPGVAGPAVLAGARAVGSVLVAGPATGLEPVTAAVGDSVALMPLAGPGVLVCALADDALALRRRLDSLAGVLTGSLADPLPVGS</sequence>
<reference key="1">
    <citation type="journal article" date="2007" name="Genome Res.">
        <title>Genome characteristics of facultatively symbiotic Frankia sp. strains reflect host range and host plant biogeography.</title>
        <authorList>
            <person name="Normand P."/>
            <person name="Lapierre P."/>
            <person name="Tisa L.S."/>
            <person name="Gogarten J.P."/>
            <person name="Alloisio N."/>
            <person name="Bagnarol E."/>
            <person name="Bassi C.A."/>
            <person name="Berry A.M."/>
            <person name="Bickhart D.M."/>
            <person name="Choisne N."/>
            <person name="Couloux A."/>
            <person name="Cournoyer B."/>
            <person name="Cruveiller S."/>
            <person name="Daubin V."/>
            <person name="Demange N."/>
            <person name="Francino M.P."/>
            <person name="Goltsman E."/>
            <person name="Huang Y."/>
            <person name="Kopp O.R."/>
            <person name="Labarre L."/>
            <person name="Lapidus A."/>
            <person name="Lavire C."/>
            <person name="Marechal J."/>
            <person name="Martinez M."/>
            <person name="Mastronunzio J.E."/>
            <person name="Mullin B.C."/>
            <person name="Niemann J."/>
            <person name="Pujic P."/>
            <person name="Rawnsley T."/>
            <person name="Rouy Z."/>
            <person name="Schenowitz C."/>
            <person name="Sellstedt A."/>
            <person name="Tavares F."/>
            <person name="Tomkins J.P."/>
            <person name="Vallenet D."/>
            <person name="Valverde C."/>
            <person name="Wall L.G."/>
            <person name="Wang Y."/>
            <person name="Medigue C."/>
            <person name="Benson D.R."/>
        </authorList>
    </citation>
    <scope>NUCLEOTIDE SEQUENCE [LARGE SCALE GENOMIC DNA]</scope>
    <source>
        <strain>EAN1pec</strain>
    </source>
</reference>
<evidence type="ECO:0000255" key="1">
    <source>
        <dbReference type="HAMAP-Rule" id="MF_01384"/>
    </source>
</evidence>
<evidence type="ECO:0000256" key="2">
    <source>
        <dbReference type="SAM" id="MobiDB-lite"/>
    </source>
</evidence>
<dbReference type="EMBL" id="CP000820">
    <property type="protein sequence ID" value="ABW15052.1"/>
    <property type="molecule type" value="Genomic_DNA"/>
</dbReference>
<dbReference type="RefSeq" id="WP_020463154.1">
    <property type="nucleotide sequence ID" value="NC_009921.1"/>
</dbReference>
<dbReference type="SMR" id="A8L7B7"/>
<dbReference type="STRING" id="298653.Franean1_5702"/>
<dbReference type="KEGG" id="fre:Franean1_5702"/>
<dbReference type="eggNOG" id="COG0829">
    <property type="taxonomic scope" value="Bacteria"/>
</dbReference>
<dbReference type="HOGENOM" id="CLU_055097_2_0_11"/>
<dbReference type="GO" id="GO:0005737">
    <property type="term" value="C:cytoplasm"/>
    <property type="evidence" value="ECO:0007669"/>
    <property type="project" value="UniProtKB-SubCell"/>
</dbReference>
<dbReference type="GO" id="GO:0016151">
    <property type="term" value="F:nickel cation binding"/>
    <property type="evidence" value="ECO:0007669"/>
    <property type="project" value="UniProtKB-UniRule"/>
</dbReference>
<dbReference type="HAMAP" id="MF_01384">
    <property type="entry name" value="UreD"/>
    <property type="match status" value="1"/>
</dbReference>
<dbReference type="InterPro" id="IPR002669">
    <property type="entry name" value="UreD"/>
</dbReference>
<dbReference type="PANTHER" id="PTHR33643">
    <property type="entry name" value="UREASE ACCESSORY PROTEIN D"/>
    <property type="match status" value="1"/>
</dbReference>
<dbReference type="PANTHER" id="PTHR33643:SF1">
    <property type="entry name" value="UREASE ACCESSORY PROTEIN D"/>
    <property type="match status" value="1"/>
</dbReference>
<dbReference type="Pfam" id="PF01774">
    <property type="entry name" value="UreD"/>
    <property type="match status" value="1"/>
</dbReference>
<name>URED_PARS2</name>
<feature type="chain" id="PRO_0000346565" description="Urease accessory protein UreD">
    <location>
        <begin position="1"/>
        <end position="297"/>
    </location>
</feature>
<feature type="region of interest" description="Disordered" evidence="2">
    <location>
        <begin position="1"/>
        <end position="20"/>
    </location>
</feature>
<feature type="region of interest" description="Disordered" evidence="2">
    <location>
        <begin position="178"/>
        <end position="201"/>
    </location>
</feature>
<feature type="compositionally biased region" description="Low complexity" evidence="2">
    <location>
        <begin position="1"/>
        <end position="18"/>
    </location>
</feature>
<proteinExistence type="inferred from homology"/>
<keyword id="KW-0143">Chaperone</keyword>
<keyword id="KW-0963">Cytoplasm</keyword>
<keyword id="KW-0996">Nickel insertion</keyword>
<organism>
    <name type="scientific">Parafrankia sp. (strain EAN1pec)</name>
    <dbReference type="NCBI Taxonomy" id="298653"/>
    <lineage>
        <taxon>Bacteria</taxon>
        <taxon>Bacillati</taxon>
        <taxon>Actinomycetota</taxon>
        <taxon>Actinomycetes</taxon>
        <taxon>Frankiales</taxon>
        <taxon>Frankiaceae</taxon>
        <taxon>Parafrankia</taxon>
    </lineage>
</organism>
<gene>
    <name evidence="1" type="primary">ureD</name>
    <name type="ordered locus">Franean1_5702</name>
</gene>
<protein>
    <recommendedName>
        <fullName evidence="1">Urease accessory protein UreD</fullName>
    </recommendedName>
</protein>
<comment type="function">
    <text evidence="1">Required for maturation of urease via the functional incorporation of the urease nickel metallocenter.</text>
</comment>
<comment type="subunit">
    <text evidence="1">UreD, UreF and UreG form a complex that acts as a GTP-hydrolysis-dependent molecular chaperone, activating the urease apoprotein by helping to assemble the nickel containing metallocenter of UreC. The UreE protein probably delivers the nickel.</text>
</comment>
<comment type="subcellular location">
    <subcellularLocation>
        <location evidence="1">Cytoplasm</location>
    </subcellularLocation>
</comment>
<comment type="similarity">
    <text evidence="1">Belongs to the UreD family.</text>
</comment>